<gene>
    <name type="ORF">ORF99</name>
</gene>
<evidence type="ECO:0007829" key="1">
    <source>
        <dbReference type="PDB" id="3DF6"/>
    </source>
</evidence>
<dbReference type="EMBL" id="AJ567472">
    <property type="protein sequence ID" value="CAD98932.1"/>
    <property type="molecule type" value="Genomic_DNA"/>
</dbReference>
<dbReference type="RefSeq" id="YP_003728.1">
    <property type="nucleotide sequence ID" value="NC_005830.1"/>
</dbReference>
<dbReference type="PDB" id="3DF6">
    <property type="method" value="X-ray"/>
    <property type="resolution" value="2.05 A"/>
    <property type="chains" value="A/B/C/D=2-99"/>
</dbReference>
<dbReference type="PDB" id="3DJW">
    <property type="method" value="X-ray"/>
    <property type="resolution" value="3.10 A"/>
    <property type="chains" value="A/B=2-99"/>
</dbReference>
<dbReference type="PDBsum" id="3DF6"/>
<dbReference type="PDBsum" id="3DJW"/>
<dbReference type="SMR" id="Q70LE8"/>
<dbReference type="KEGG" id="vg:2769193"/>
<dbReference type="EvolutionaryTrace" id="Q70LE8"/>
<dbReference type="Proteomes" id="UP000000514">
    <property type="component" value="Genome"/>
</dbReference>
<dbReference type="CDD" id="cd22267">
    <property type="entry name" value="AcrID1"/>
    <property type="match status" value="1"/>
</dbReference>
<dbReference type="Gene3D" id="3.30.160.300">
    <property type="match status" value="1"/>
</dbReference>
<dbReference type="InterPro" id="IPR009804">
    <property type="entry name" value="SIFV_Orf14"/>
</dbReference>
<dbReference type="NCBIfam" id="NF033952">
    <property type="entry name" value="AcrID1_fam"/>
    <property type="match status" value="1"/>
</dbReference>
<dbReference type="Pfam" id="PF07118">
    <property type="entry name" value="DUF1374"/>
    <property type="match status" value="1"/>
</dbReference>
<sequence length="99" mass="11692">MDTHEFHKLLIKVVDLFLEDRIKEFELKLNTTLDELEFEELIGKPDSSNSAENNGIFIDEYSYDASENAIKKLFVEYVRQPEFKYTVLSIKGVNDWVRE</sequence>
<organismHost>
    <name type="scientific">Acidianus hospitalis</name>
    <dbReference type="NCBI Taxonomy" id="563177"/>
</organismHost>
<organismHost>
    <name type="scientific">Acidianus infernus</name>
    <dbReference type="NCBI Taxonomy" id="12915"/>
</organismHost>
<proteinExistence type="evidence at protein level"/>
<protein>
    <recommendedName>
        <fullName>Uncharacterized protein ORF99</fullName>
    </recommendedName>
</protein>
<feature type="chain" id="PRO_0000384550" description="Uncharacterized protein ORF99">
    <location>
        <begin position="1"/>
        <end position="99"/>
    </location>
</feature>
<feature type="helix" evidence="1">
    <location>
        <begin position="3"/>
        <end position="18"/>
    </location>
</feature>
<feature type="strand" evidence="1">
    <location>
        <begin position="21"/>
        <end position="33"/>
    </location>
</feature>
<feature type="helix" evidence="1">
    <location>
        <begin position="35"/>
        <end position="42"/>
    </location>
</feature>
<feature type="strand" evidence="1">
    <location>
        <begin position="46"/>
        <end position="53"/>
    </location>
</feature>
<feature type="strand" evidence="1">
    <location>
        <begin position="56"/>
        <end position="64"/>
    </location>
</feature>
<feature type="strand" evidence="1">
    <location>
        <begin position="66"/>
        <end position="80"/>
    </location>
</feature>
<feature type="turn" evidence="1">
    <location>
        <begin position="81"/>
        <end position="83"/>
    </location>
</feature>
<feature type="strand" evidence="1">
    <location>
        <begin position="84"/>
        <end position="97"/>
    </location>
</feature>
<accession>Q70LE8</accession>
<name>Y099_AFV1Y</name>
<organism>
    <name type="scientific">Acidianus filamentous virus 1 (isolate United States/Yellowstone)</name>
    <name type="common">AFV-1</name>
    <dbReference type="NCBI Taxonomy" id="654909"/>
    <lineage>
        <taxon>Viruses</taxon>
        <taxon>Adnaviria</taxon>
        <taxon>Zilligvirae</taxon>
        <taxon>Taleaviricota</taxon>
        <taxon>Tokiviricetes</taxon>
        <taxon>Ligamenvirales</taxon>
        <taxon>Ungulaviridae</taxon>
        <taxon>Captovirus</taxon>
        <taxon>Acidianus filamentous virus 1</taxon>
    </lineage>
</organism>
<keyword id="KW-0002">3D-structure</keyword>
<keyword id="KW-1185">Reference proteome</keyword>
<reference key="1">
    <citation type="journal article" date="2003" name="Virology">
        <title>AFV1, a novel virus infecting hyperthermophilic archaea of the genus acidianus.</title>
        <authorList>
            <person name="Bettstetter M."/>
            <person name="Peng X."/>
            <person name="Garrett R.A."/>
            <person name="Prangishvili D."/>
        </authorList>
    </citation>
    <scope>NUCLEOTIDE SEQUENCE [GENOMIC DNA]</scope>
</reference>
<reference key="2">
    <citation type="journal article" date="2009" name="Protein Sci.">
        <title>The thermo- and acido-stable ORF-99 from the archaeal virus AFV1.</title>
        <authorList>
            <person name="Goulet A."/>
            <person name="Spinelli S."/>
            <person name="Blangy S."/>
            <person name="van Tilbeurgh H."/>
            <person name="Leulliot N."/>
            <person name="Basta T."/>
            <person name="Prangishvili D."/>
            <person name="Cambillau C."/>
            <person name="Campanacci V."/>
        </authorList>
    </citation>
    <scope>X-RAY CRYSTALLOGRAPHY (2.05 AND 3.1 ANGSTROMS) OF 2-99</scope>
</reference>